<name>NU4LM_ECHTE</name>
<reference key="1">
    <citation type="journal article" date="2000" name="Zool. Scr.">
        <title>Phylogenetic position of the tenrecs (Mammalia: Tenrecidae) of Madagascar based on analysis of the complete mitochondrial genome sequence of Echinops telfairi.</title>
        <authorList>
            <person name="Mouchaty S.K."/>
            <person name="Gullberg A."/>
            <person name="Janke A."/>
            <person name="Arnason U."/>
        </authorList>
    </citation>
    <scope>NUCLEOTIDE SEQUENCE [GENOMIC DNA]</scope>
</reference>
<reference key="2">
    <citation type="journal article" date="2003" name="Genes Genet. Syst.">
        <title>The phylogenetic relationships of insectivores with special reference to the lesser hedgehog tenrec as inferred from the complete sequence of their mitochondrial genome.</title>
        <authorList>
            <person name="Nikaido M."/>
            <person name="Cao Y."/>
            <person name="Okada N."/>
            <person name="Hasegawa M."/>
        </authorList>
    </citation>
    <scope>NUCLEOTIDE SEQUENCE [GENOMIC DNA]</scope>
</reference>
<dbReference type="EC" id="7.1.1.2"/>
<dbReference type="EMBL" id="AJ400734">
    <property type="protein sequence ID" value="CAC19400.1"/>
    <property type="molecule type" value="Genomic_DNA"/>
</dbReference>
<dbReference type="EMBL" id="AJ245806">
    <property type="protein sequence ID" value="CAC69926.1"/>
    <property type="molecule type" value="Genomic_DNA"/>
</dbReference>
<dbReference type="EMBL" id="AB099484">
    <property type="protein sequence ID" value="BAC78895.1"/>
    <property type="molecule type" value="Genomic_DNA"/>
</dbReference>
<dbReference type="RefSeq" id="NP_072065.1">
    <property type="nucleotide sequence ID" value="NC_002631.2"/>
</dbReference>
<dbReference type="SMR" id="Q9G385"/>
<dbReference type="Ensembl" id="ENSETET00000026980">
    <property type="protein sequence ID" value="ENSETEP00000016591"/>
    <property type="gene ID" value="ENSETEG00000026980"/>
</dbReference>
<dbReference type="GeneID" id="802334"/>
<dbReference type="KEGG" id="etf:802334"/>
<dbReference type="CTD" id="4539"/>
<dbReference type="HOGENOM" id="CLU_182394_0_0_1"/>
<dbReference type="OrthoDB" id="6146597at2759"/>
<dbReference type="Proteomes" id="UP000694863">
    <property type="component" value="Mitochondrion MT"/>
</dbReference>
<dbReference type="GO" id="GO:0005743">
    <property type="term" value="C:mitochondrial inner membrane"/>
    <property type="evidence" value="ECO:0000250"/>
    <property type="project" value="UniProtKB"/>
</dbReference>
<dbReference type="GO" id="GO:0045271">
    <property type="term" value="C:respiratory chain complex I"/>
    <property type="evidence" value="ECO:0000250"/>
    <property type="project" value="UniProtKB"/>
</dbReference>
<dbReference type="GO" id="GO:0008137">
    <property type="term" value="F:NADH dehydrogenase (ubiquinone) activity"/>
    <property type="evidence" value="ECO:0000250"/>
    <property type="project" value="UniProtKB"/>
</dbReference>
<dbReference type="GO" id="GO:0042773">
    <property type="term" value="P:ATP synthesis coupled electron transport"/>
    <property type="evidence" value="ECO:0007669"/>
    <property type="project" value="InterPro"/>
</dbReference>
<dbReference type="FunFam" id="1.10.287.3510:FF:000002">
    <property type="entry name" value="NADH-ubiquinone oxidoreductase chain 4L"/>
    <property type="match status" value="1"/>
</dbReference>
<dbReference type="Gene3D" id="1.10.287.3510">
    <property type="match status" value="1"/>
</dbReference>
<dbReference type="InterPro" id="IPR001133">
    <property type="entry name" value="NADH_UbQ_OxRdtase_chain4L/K"/>
</dbReference>
<dbReference type="InterPro" id="IPR039428">
    <property type="entry name" value="NUOK/Mnh_C1-like"/>
</dbReference>
<dbReference type="PANTHER" id="PTHR11434:SF0">
    <property type="entry name" value="NADH-UBIQUINONE OXIDOREDUCTASE CHAIN 4L"/>
    <property type="match status" value="1"/>
</dbReference>
<dbReference type="PANTHER" id="PTHR11434">
    <property type="entry name" value="NADH-UBIQUINONE OXIDOREDUCTASE SUBUNIT ND4L"/>
    <property type="match status" value="1"/>
</dbReference>
<dbReference type="Pfam" id="PF00420">
    <property type="entry name" value="Oxidored_q2"/>
    <property type="match status" value="1"/>
</dbReference>
<protein>
    <recommendedName>
        <fullName>NADH-ubiquinone oxidoreductase chain 4L</fullName>
        <ecNumber>7.1.1.2</ecNumber>
    </recommendedName>
    <alternativeName>
        <fullName>NADH dehydrogenase subunit 4L</fullName>
    </alternativeName>
</protein>
<feature type="chain" id="PRO_0000275010" description="NADH-ubiquinone oxidoreductase chain 4L">
    <location>
        <begin position="1"/>
        <end position="98"/>
    </location>
</feature>
<feature type="transmembrane region" description="Helical" evidence="3">
    <location>
        <begin position="1"/>
        <end position="21"/>
    </location>
</feature>
<feature type="transmembrane region" description="Helical" evidence="3">
    <location>
        <begin position="29"/>
        <end position="49"/>
    </location>
</feature>
<feature type="transmembrane region" description="Helical" evidence="3">
    <location>
        <begin position="61"/>
        <end position="81"/>
    </location>
</feature>
<feature type="sequence conflict" description="In Ref. 2; BAC78895." evidence="4" ref="2">
    <original>M</original>
    <variation>V</variation>
    <location>
        <position position="17"/>
    </location>
</feature>
<accession>Q9G385</accession>
<accession>Q7YD90</accession>
<proteinExistence type="inferred from homology"/>
<organism>
    <name type="scientific">Echinops telfairi</name>
    <name type="common">Lesser hedgehog tenrec</name>
    <dbReference type="NCBI Taxonomy" id="9371"/>
    <lineage>
        <taxon>Eukaryota</taxon>
        <taxon>Metazoa</taxon>
        <taxon>Chordata</taxon>
        <taxon>Craniata</taxon>
        <taxon>Vertebrata</taxon>
        <taxon>Euteleostomi</taxon>
        <taxon>Mammalia</taxon>
        <taxon>Eutheria</taxon>
        <taxon>Afrotheria</taxon>
        <taxon>Tenrecidae</taxon>
        <taxon>Tenrecinae</taxon>
        <taxon>Echinops</taxon>
    </lineage>
</organism>
<sequence>MPVIYINLIAAFFMAFMGLLIYRSHLMSSLLCLEGMMLSLFILNSTLALSMHFTLYSMMPIILLVFAACEAALGLSLLVMVSNTYGLDYVQNLNLLQC</sequence>
<evidence type="ECO:0000250" key="1">
    <source>
        <dbReference type="UniProtKB" id="P03901"/>
    </source>
</evidence>
<evidence type="ECO:0000250" key="2">
    <source>
        <dbReference type="UniProtKB" id="P03902"/>
    </source>
</evidence>
<evidence type="ECO:0000255" key="3"/>
<evidence type="ECO:0000305" key="4"/>
<keyword id="KW-0249">Electron transport</keyword>
<keyword id="KW-0472">Membrane</keyword>
<keyword id="KW-0496">Mitochondrion</keyword>
<keyword id="KW-0999">Mitochondrion inner membrane</keyword>
<keyword id="KW-0520">NAD</keyword>
<keyword id="KW-0679">Respiratory chain</keyword>
<keyword id="KW-1278">Translocase</keyword>
<keyword id="KW-0812">Transmembrane</keyword>
<keyword id="KW-1133">Transmembrane helix</keyword>
<keyword id="KW-0813">Transport</keyword>
<keyword id="KW-0830">Ubiquinone</keyword>
<geneLocation type="mitochondrion"/>
<comment type="function">
    <text evidence="1">Core subunit of the mitochondrial membrane respiratory chain NADH dehydrogenase (Complex I) which catalyzes electron transfer from NADH through the respiratory chain, using ubiquinone as an electron acceptor. Part of the enzyme membrane arm which is embedded in the lipid bilayer and involved in proton translocation.</text>
</comment>
<comment type="catalytic activity">
    <reaction evidence="1">
        <text>a ubiquinone + NADH + 5 H(+)(in) = a ubiquinol + NAD(+) + 4 H(+)(out)</text>
        <dbReference type="Rhea" id="RHEA:29091"/>
        <dbReference type="Rhea" id="RHEA-COMP:9565"/>
        <dbReference type="Rhea" id="RHEA-COMP:9566"/>
        <dbReference type="ChEBI" id="CHEBI:15378"/>
        <dbReference type="ChEBI" id="CHEBI:16389"/>
        <dbReference type="ChEBI" id="CHEBI:17976"/>
        <dbReference type="ChEBI" id="CHEBI:57540"/>
        <dbReference type="ChEBI" id="CHEBI:57945"/>
        <dbReference type="EC" id="7.1.1.2"/>
    </reaction>
    <physiologicalReaction direction="left-to-right" evidence="1">
        <dbReference type="Rhea" id="RHEA:29092"/>
    </physiologicalReaction>
</comment>
<comment type="subunit">
    <text evidence="2">Core subunit of respiratory chain NADH dehydrogenase (Complex I) which is composed of 45 different subunits.</text>
</comment>
<comment type="subcellular location">
    <subcellularLocation>
        <location evidence="2">Mitochondrion inner membrane</location>
        <topology evidence="3">Multi-pass membrane protein</topology>
    </subcellularLocation>
</comment>
<comment type="similarity">
    <text evidence="4">Belongs to the complex I subunit 4L family.</text>
</comment>
<gene>
    <name type="primary">MT-ND4L</name>
    <name type="synonym">MTND4L</name>
    <name type="synonym">NADH4L</name>
    <name type="synonym">ND4L</name>
</gene>